<keyword id="KW-0106">Calcium</keyword>
<keyword id="KW-0342">GTP-binding</keyword>
<keyword id="KW-0378">Hydrolase</keyword>
<keyword id="KW-0460">Magnesium</keyword>
<keyword id="KW-0472">Membrane</keyword>
<keyword id="KW-0479">Metal-binding</keyword>
<keyword id="KW-0496">Mitochondrion</keyword>
<keyword id="KW-1000">Mitochondrion outer membrane</keyword>
<keyword id="KW-0547">Nucleotide-binding</keyword>
<keyword id="KW-1185">Reference proteome</keyword>
<keyword id="KW-0677">Repeat</keyword>
<keyword id="KW-0812">Transmembrane</keyword>
<keyword id="KW-1133">Transmembrane helix</keyword>
<comment type="function">
    <text evidence="1">Atypical mitochondrial nucleoside-triphosphatase (NTPase) involved in mitochondrial trafficking. Probably involved in control of anterograde transport of mitochondria and their subcellular distribution. Can hydrolyze GTP, ATP and UTP (By similarity).</text>
</comment>
<comment type="catalytic activity">
    <reaction evidence="1">
        <text>GTP + H2O = GDP + phosphate + H(+)</text>
        <dbReference type="Rhea" id="RHEA:19669"/>
        <dbReference type="ChEBI" id="CHEBI:15377"/>
        <dbReference type="ChEBI" id="CHEBI:15378"/>
        <dbReference type="ChEBI" id="CHEBI:37565"/>
        <dbReference type="ChEBI" id="CHEBI:43474"/>
        <dbReference type="ChEBI" id="CHEBI:58189"/>
    </reaction>
    <physiologicalReaction direction="left-to-right" evidence="1">
        <dbReference type="Rhea" id="RHEA:19670"/>
    </physiologicalReaction>
</comment>
<comment type="catalytic activity">
    <reaction evidence="1">
        <text>ATP + H2O = ADP + phosphate + H(+)</text>
        <dbReference type="Rhea" id="RHEA:13065"/>
        <dbReference type="ChEBI" id="CHEBI:15377"/>
        <dbReference type="ChEBI" id="CHEBI:15378"/>
        <dbReference type="ChEBI" id="CHEBI:30616"/>
        <dbReference type="ChEBI" id="CHEBI:43474"/>
        <dbReference type="ChEBI" id="CHEBI:456216"/>
    </reaction>
    <physiologicalReaction direction="left-to-right" evidence="1">
        <dbReference type="Rhea" id="RHEA:13066"/>
    </physiologicalReaction>
</comment>
<comment type="catalytic activity">
    <reaction evidence="1">
        <text>UTP + H2O = UDP + phosphate + H(+)</text>
        <dbReference type="Rhea" id="RHEA:64900"/>
        <dbReference type="ChEBI" id="CHEBI:15377"/>
        <dbReference type="ChEBI" id="CHEBI:15378"/>
        <dbReference type="ChEBI" id="CHEBI:43474"/>
        <dbReference type="ChEBI" id="CHEBI:46398"/>
        <dbReference type="ChEBI" id="CHEBI:58223"/>
    </reaction>
    <physiologicalReaction direction="left-to-right" evidence="1">
        <dbReference type="Rhea" id="RHEA:64901"/>
    </physiologicalReaction>
</comment>
<comment type="subunit">
    <text evidence="1">Homodimer.</text>
</comment>
<comment type="subcellular location">
    <subcellularLocation>
        <location evidence="1">Mitochondrion outer membrane</location>
        <topology evidence="1">Single-pass type IV membrane protein</topology>
    </subcellularLocation>
</comment>
<comment type="similarity">
    <text evidence="4 5">Belongs to the mitochondrial Rho GTPase family.</text>
</comment>
<sequence length="619" mass="71198">MRKDVRILLVGEPKVGKTSLIMSLVSEEFPDEVPPRAEEITIPADVTPERVPTHIVDYSEAEQSDEQLYQEITKANVICIVYSVNNKKSIEKVTSHWIPLINERTDKDSRVPLILVGNKSDLVEHSSMETILPIMNQYSEIETCVECSAKNLKNISELFYYAQKAVLHPTGPLYSPEEKEMKPSCIKALTRIFKISDLDNDGILNDNELNFFQRTCFNIPLAPQALEDVKNVVRKNMTDGVKDNGLTLKGFLFLHTLFIQRGRHETTWTVLRRFGYDDDLELTQEYLFPLFKIPPDCTTELNHNAYLFLQSVFDKHDKDRDCALSPDELKDLFKVFPYMPWGPDVNNTVCTNEQGWITYQGYLSQWTLTTYLDVQRCLEYLGYLGYSIIQEQESQAAAITVTRNKRIDLQKKQTQRSVFRCNVLGARGCGKSGFLQAFLGRNLVRQKRIREDHKSYYAISTTYVYGQEKYLLLHEVLPDVEFLSEADLACDVVCLVYDISNPRSFEYCAKVYKKHFMDSKTPCVIIAAKSDLHEARQYYSLSPLDFCRKHKLHPPQLFTCNTTEAPSKDLYTKLTTMAMYPHMTQADLKNSTFWLRASVGATVFAVLGFAMYKALLKQR</sequence>
<gene>
    <name type="primary">rhot1a</name>
    <name type="ORF">zgc:55581</name>
</gene>
<organism>
    <name type="scientific">Danio rerio</name>
    <name type="common">Zebrafish</name>
    <name type="synonym">Brachydanio rerio</name>
    <dbReference type="NCBI Taxonomy" id="7955"/>
    <lineage>
        <taxon>Eukaryota</taxon>
        <taxon>Metazoa</taxon>
        <taxon>Chordata</taxon>
        <taxon>Craniata</taxon>
        <taxon>Vertebrata</taxon>
        <taxon>Euteleostomi</taxon>
        <taxon>Actinopterygii</taxon>
        <taxon>Neopterygii</taxon>
        <taxon>Teleostei</taxon>
        <taxon>Ostariophysi</taxon>
        <taxon>Cypriniformes</taxon>
        <taxon>Danionidae</taxon>
        <taxon>Danioninae</taxon>
        <taxon>Danio</taxon>
    </lineage>
</organism>
<feature type="chain" id="PRO_0000239316" description="Mitochondrial Rho GTPase 1-A">
    <location>
        <begin position="1"/>
        <end position="619"/>
    </location>
</feature>
<feature type="topological domain" description="Cytoplasmic" evidence="2">
    <location>
        <begin position="1"/>
        <end position="593"/>
    </location>
</feature>
<feature type="transmembrane region" description="Helical; Anchor for type IV membrane protein" evidence="2">
    <location>
        <begin position="594"/>
        <end position="616"/>
    </location>
</feature>
<feature type="topological domain" description="Mitochondrial intermembrane" evidence="2">
    <location>
        <begin position="617"/>
        <end position="619"/>
    </location>
</feature>
<feature type="domain" description="Miro 1" evidence="4">
    <location>
        <begin position="2"/>
        <end position="168"/>
    </location>
</feature>
<feature type="domain" description="EF-hand 1" evidence="3">
    <location>
        <begin position="184"/>
        <end position="219"/>
    </location>
</feature>
<feature type="domain" description="EF-hand 2" evidence="3">
    <location>
        <begin position="304"/>
        <end position="339"/>
    </location>
</feature>
<feature type="domain" description="Miro 2" evidence="4">
    <location>
        <begin position="416"/>
        <end position="580"/>
    </location>
</feature>
<feature type="binding site" evidence="1">
    <location>
        <position position="14"/>
    </location>
    <ligand>
        <name>GTP</name>
        <dbReference type="ChEBI" id="CHEBI:37565"/>
        <label>1</label>
    </ligand>
</feature>
<feature type="binding site" evidence="1">
    <location>
        <position position="16"/>
    </location>
    <ligand>
        <name>GTP</name>
        <dbReference type="ChEBI" id="CHEBI:37565"/>
        <label>1</label>
    </ligand>
</feature>
<feature type="binding site" evidence="1">
    <location>
        <position position="17"/>
    </location>
    <ligand>
        <name>GTP</name>
        <dbReference type="ChEBI" id="CHEBI:37565"/>
        <label>1</label>
    </ligand>
</feature>
<feature type="binding site" evidence="1">
    <location>
        <position position="18"/>
    </location>
    <ligand>
        <name>GTP</name>
        <dbReference type="ChEBI" id="CHEBI:37565"/>
        <label>1</label>
    </ligand>
</feature>
<feature type="binding site" evidence="1">
    <location>
        <position position="18"/>
    </location>
    <ligand>
        <name>Mg(2+)</name>
        <dbReference type="ChEBI" id="CHEBI:18420"/>
        <label>1</label>
    </ligand>
</feature>
<feature type="binding site" evidence="1">
    <location>
        <position position="19"/>
    </location>
    <ligand>
        <name>GTP</name>
        <dbReference type="ChEBI" id="CHEBI:37565"/>
        <label>1</label>
    </ligand>
</feature>
<feature type="binding site" evidence="1">
    <location>
        <position position="35"/>
    </location>
    <ligand>
        <name>Mg(2+)</name>
        <dbReference type="ChEBI" id="CHEBI:18420"/>
        <label>1</label>
    </ligand>
</feature>
<feature type="binding site" evidence="1">
    <location>
        <position position="57"/>
    </location>
    <ligand>
        <name>Mg(2+)</name>
        <dbReference type="ChEBI" id="CHEBI:18420"/>
        <label>1</label>
    </ligand>
</feature>
<feature type="binding site" evidence="1">
    <location>
        <position position="59"/>
    </location>
    <ligand>
        <name>GTP</name>
        <dbReference type="ChEBI" id="CHEBI:37565"/>
        <label>1</label>
    </ligand>
</feature>
<feature type="binding site" evidence="1">
    <location>
        <position position="118"/>
    </location>
    <ligand>
        <name>GTP</name>
        <dbReference type="ChEBI" id="CHEBI:37565"/>
        <label>1</label>
    </ligand>
</feature>
<feature type="binding site" evidence="1">
    <location>
        <position position="119"/>
    </location>
    <ligand>
        <name>GTP</name>
        <dbReference type="ChEBI" id="CHEBI:37565"/>
        <label>1</label>
    </ligand>
</feature>
<feature type="binding site" evidence="1">
    <location>
        <position position="121"/>
    </location>
    <ligand>
        <name>GTP</name>
        <dbReference type="ChEBI" id="CHEBI:37565"/>
        <label>1</label>
    </ligand>
</feature>
<feature type="binding site" evidence="1">
    <location>
        <position position="149"/>
    </location>
    <ligand>
        <name>GTP</name>
        <dbReference type="ChEBI" id="CHEBI:37565"/>
        <label>1</label>
    </ligand>
</feature>
<feature type="binding site" evidence="1">
    <location>
        <position position="150"/>
    </location>
    <ligand>
        <name>GTP</name>
        <dbReference type="ChEBI" id="CHEBI:37565"/>
        <label>1</label>
    </ligand>
</feature>
<feature type="binding site" evidence="3">
    <location>
        <position position="197"/>
    </location>
    <ligand>
        <name>Ca(2+)</name>
        <dbReference type="ChEBI" id="CHEBI:29108"/>
        <label>1</label>
    </ligand>
</feature>
<feature type="binding site" evidence="3">
    <location>
        <position position="199"/>
    </location>
    <ligand>
        <name>Ca(2+)</name>
        <dbReference type="ChEBI" id="CHEBI:29108"/>
        <label>1</label>
    </ligand>
</feature>
<feature type="binding site" evidence="3">
    <location>
        <position position="201"/>
    </location>
    <ligand>
        <name>Ca(2+)</name>
        <dbReference type="ChEBI" id="CHEBI:29108"/>
        <label>1</label>
    </ligand>
</feature>
<feature type="binding site" evidence="3">
    <location>
        <position position="208"/>
    </location>
    <ligand>
        <name>Ca(2+)</name>
        <dbReference type="ChEBI" id="CHEBI:29108"/>
        <label>1</label>
    </ligand>
</feature>
<feature type="binding site" evidence="1">
    <location>
        <position position="317"/>
    </location>
    <ligand>
        <name>Ca(2+)</name>
        <dbReference type="ChEBI" id="CHEBI:29108"/>
        <label>2</label>
    </ligand>
</feature>
<feature type="binding site" evidence="1">
    <location>
        <position position="319"/>
    </location>
    <ligand>
        <name>Ca(2+)</name>
        <dbReference type="ChEBI" id="CHEBI:29108"/>
        <label>2</label>
    </ligand>
</feature>
<feature type="binding site" evidence="1">
    <location>
        <position position="321"/>
    </location>
    <ligand>
        <name>Ca(2+)</name>
        <dbReference type="ChEBI" id="CHEBI:29108"/>
        <label>2</label>
    </ligand>
</feature>
<feature type="binding site" evidence="1">
    <location>
        <position position="323"/>
    </location>
    <ligand>
        <name>Ca(2+)</name>
        <dbReference type="ChEBI" id="CHEBI:29108"/>
        <label>2</label>
    </ligand>
</feature>
<feature type="binding site" evidence="1">
    <location>
        <position position="328"/>
    </location>
    <ligand>
        <name>Ca(2+)</name>
        <dbReference type="ChEBI" id="CHEBI:29108"/>
        <label>2</label>
    </ligand>
</feature>
<feature type="binding site" evidence="1">
    <location>
        <position position="427"/>
    </location>
    <ligand>
        <name>GTP</name>
        <dbReference type="ChEBI" id="CHEBI:37565"/>
        <label>2</label>
    </ligand>
</feature>
<feature type="binding site" evidence="1">
    <location>
        <position position="427"/>
    </location>
    <ligand>
        <name>Mg(2+)</name>
        <dbReference type="ChEBI" id="CHEBI:18420"/>
        <label>2</label>
    </ligand>
</feature>
<feature type="binding site" evidence="1">
    <location>
        <position position="429"/>
    </location>
    <ligand>
        <name>GTP</name>
        <dbReference type="ChEBI" id="CHEBI:37565"/>
        <label>2</label>
    </ligand>
</feature>
<feature type="binding site" evidence="1">
    <location>
        <position position="430"/>
    </location>
    <ligand>
        <name>GTP</name>
        <dbReference type="ChEBI" id="CHEBI:37565"/>
        <label>2</label>
    </ligand>
</feature>
<feature type="binding site" evidence="1">
    <location>
        <position position="431"/>
    </location>
    <ligand>
        <name>GTP</name>
        <dbReference type="ChEBI" id="CHEBI:37565"/>
        <label>2</label>
    </ligand>
</feature>
<feature type="binding site" evidence="1">
    <location>
        <position position="432"/>
    </location>
    <ligand>
        <name>GTP</name>
        <dbReference type="ChEBI" id="CHEBI:37565"/>
        <label>2</label>
    </ligand>
</feature>
<feature type="binding site" evidence="1">
    <location>
        <position position="433"/>
    </location>
    <ligand>
        <name>GTP</name>
        <dbReference type="ChEBI" id="CHEBI:37565"/>
        <label>2</label>
    </ligand>
</feature>
<feature type="binding site" evidence="1">
    <location>
        <position position="447"/>
    </location>
    <ligand>
        <name>GTP</name>
        <dbReference type="ChEBI" id="CHEBI:37565"/>
        <label>2</label>
    </ligand>
</feature>
<feature type="binding site" evidence="1">
    <location>
        <position position="529"/>
    </location>
    <ligand>
        <name>GTP</name>
        <dbReference type="ChEBI" id="CHEBI:37565"/>
        <label>2</label>
    </ligand>
</feature>
<feature type="binding site" evidence="1">
    <location>
        <position position="531"/>
    </location>
    <ligand>
        <name>GTP</name>
        <dbReference type="ChEBI" id="CHEBI:37565"/>
        <label>2</label>
    </ligand>
</feature>
<feature type="binding site" evidence="1">
    <location>
        <position position="559"/>
    </location>
    <ligand>
        <name>GTP</name>
        <dbReference type="ChEBI" id="CHEBI:37565"/>
        <label>2</label>
    </ligand>
</feature>
<feature type="binding site" evidence="1">
    <location>
        <position position="560"/>
    </location>
    <ligand>
        <name>GTP</name>
        <dbReference type="ChEBI" id="CHEBI:37565"/>
        <label>2</label>
    </ligand>
</feature>
<feature type="sequence conflict" description="In Ref. 1; AAH44431." evidence="5" ref="1">
    <original>C</original>
    <variation>R</variation>
    <location>
        <position position="185"/>
    </location>
</feature>
<feature type="sequence conflict" description="In Ref. 1; AAH44431." evidence="5" ref="1">
    <original>Q</original>
    <variation>L</variation>
    <location>
        <position position="213"/>
    </location>
</feature>
<name>MIRO1_DANRE</name>
<reference key="1">
    <citation type="submission" date="2004-03" db="EMBL/GenBank/DDBJ databases">
        <authorList>
            <consortium name="NIH - Zebrafish Gene Collection (ZGC) project"/>
        </authorList>
    </citation>
    <scope>NUCLEOTIDE SEQUENCE [LARGE SCALE MRNA]</scope>
    <source>
        <strain>AB</strain>
        <tissue>Kidney</tissue>
    </source>
</reference>
<proteinExistence type="evidence at transcript level"/>
<evidence type="ECO:0000250" key="1">
    <source>
        <dbReference type="UniProtKB" id="Q8IXI2"/>
    </source>
</evidence>
<evidence type="ECO:0000255" key="2"/>
<evidence type="ECO:0000255" key="3">
    <source>
        <dbReference type="PROSITE-ProRule" id="PRU00448"/>
    </source>
</evidence>
<evidence type="ECO:0000255" key="4">
    <source>
        <dbReference type="PROSITE-ProRule" id="PRU00757"/>
    </source>
</evidence>
<evidence type="ECO:0000305" key="5"/>
<accession>Q6NVC5</accession>
<accession>Q803L2</accession>
<protein>
    <recommendedName>
        <fullName>Mitochondrial Rho GTPase 1-A</fullName>
        <shortName>MIRO-1-A</shortName>
        <ecNumber evidence="1">3.6.5.-</ecNumber>
    </recommendedName>
    <alternativeName>
        <fullName>Ras homolog gene family member T1-A</fullName>
    </alternativeName>
</protein>
<dbReference type="EC" id="3.6.5.-" evidence="1"/>
<dbReference type="EMBL" id="BC044431">
    <property type="protein sequence ID" value="AAH44431.1"/>
    <property type="molecule type" value="mRNA"/>
</dbReference>
<dbReference type="EMBL" id="BC068190">
    <property type="protein sequence ID" value="AAH68190.1"/>
    <property type="molecule type" value="mRNA"/>
</dbReference>
<dbReference type="RefSeq" id="NP_997869.1">
    <property type="nucleotide sequence ID" value="NM_212704.1"/>
</dbReference>
<dbReference type="SMR" id="Q6NVC5"/>
<dbReference type="FunCoup" id="Q6NVC5">
    <property type="interactions" value="2727"/>
</dbReference>
<dbReference type="STRING" id="7955.ENSDARP00000141563"/>
<dbReference type="PaxDb" id="7955-ENSDARP00000024337"/>
<dbReference type="Ensembl" id="ENSDART00000163500">
    <property type="protein sequence ID" value="ENSDARP00000141563"/>
    <property type="gene ID" value="ENSDARG00000099996"/>
</dbReference>
<dbReference type="GeneID" id="327143"/>
<dbReference type="KEGG" id="dre:327143"/>
<dbReference type="AGR" id="ZFIN:ZDB-GENE-030131-5354"/>
<dbReference type="CTD" id="327143"/>
<dbReference type="ZFIN" id="ZDB-GENE-030131-5354">
    <property type="gene designation" value="rhot1a"/>
</dbReference>
<dbReference type="eggNOG" id="KOG1707">
    <property type="taxonomic scope" value="Eukaryota"/>
</dbReference>
<dbReference type="HOGENOM" id="CLU_014255_3_1_1"/>
<dbReference type="InParanoid" id="Q6NVC5"/>
<dbReference type="OMA" id="HETTWGI"/>
<dbReference type="OrthoDB" id="10020961at2759"/>
<dbReference type="PhylomeDB" id="Q6NVC5"/>
<dbReference type="TreeFam" id="TF300814"/>
<dbReference type="Reactome" id="R-DRE-5689880">
    <property type="pathway name" value="Ub-specific processing proteases"/>
</dbReference>
<dbReference type="Reactome" id="R-DRE-9013425">
    <property type="pathway name" value="RHOT1 GTPase cycle"/>
</dbReference>
<dbReference type="PRO" id="PR:Q6NVC5"/>
<dbReference type="Proteomes" id="UP000000437">
    <property type="component" value="Chromosome 3"/>
</dbReference>
<dbReference type="Bgee" id="ENSDARG00000099996">
    <property type="expression patterns" value="Expressed in heart and 30 other cell types or tissues"/>
</dbReference>
<dbReference type="ExpressionAtlas" id="Q6NVC5">
    <property type="expression patterns" value="baseline and differential"/>
</dbReference>
<dbReference type="GO" id="GO:0005741">
    <property type="term" value="C:mitochondrial outer membrane"/>
    <property type="evidence" value="ECO:0000250"/>
    <property type="project" value="UniProtKB"/>
</dbReference>
<dbReference type="GO" id="GO:0005739">
    <property type="term" value="C:mitochondrion"/>
    <property type="evidence" value="ECO:0000314"/>
    <property type="project" value="ZFIN"/>
</dbReference>
<dbReference type="GO" id="GO:0005509">
    <property type="term" value="F:calcium ion binding"/>
    <property type="evidence" value="ECO:0007669"/>
    <property type="project" value="InterPro"/>
</dbReference>
<dbReference type="GO" id="GO:0005525">
    <property type="term" value="F:GTP binding"/>
    <property type="evidence" value="ECO:0000318"/>
    <property type="project" value="GO_Central"/>
</dbReference>
<dbReference type="GO" id="GO:0003924">
    <property type="term" value="F:GTPase activity"/>
    <property type="evidence" value="ECO:0000318"/>
    <property type="project" value="GO_Central"/>
</dbReference>
<dbReference type="GO" id="GO:0019725">
    <property type="term" value="P:cellular homeostasis"/>
    <property type="evidence" value="ECO:0000250"/>
    <property type="project" value="UniProtKB"/>
</dbReference>
<dbReference type="GO" id="GO:0097345">
    <property type="term" value="P:mitochondrial outer membrane permeabilization"/>
    <property type="evidence" value="ECO:0000250"/>
    <property type="project" value="UniProtKB"/>
</dbReference>
<dbReference type="GO" id="GO:0007005">
    <property type="term" value="P:mitochondrion organization"/>
    <property type="evidence" value="ECO:0000318"/>
    <property type="project" value="GO_Central"/>
</dbReference>
<dbReference type="GO" id="GO:0047497">
    <property type="term" value="P:mitochondrion transport along microtubule"/>
    <property type="evidence" value="ECO:0000250"/>
    <property type="project" value="UniProtKB"/>
</dbReference>
<dbReference type="CDD" id="cd01893">
    <property type="entry name" value="Miro1"/>
    <property type="match status" value="1"/>
</dbReference>
<dbReference type="CDD" id="cd01892">
    <property type="entry name" value="Miro2"/>
    <property type="match status" value="1"/>
</dbReference>
<dbReference type="FunFam" id="1.10.238.10:FF:000011">
    <property type="entry name" value="Mitochondrial Rho GTPase"/>
    <property type="match status" value="1"/>
</dbReference>
<dbReference type="FunFam" id="1.10.238.10:FF:000021">
    <property type="entry name" value="Mitochondrial Rho GTPase"/>
    <property type="match status" value="1"/>
</dbReference>
<dbReference type="FunFam" id="3.40.50.300:FF:000170">
    <property type="entry name" value="Mitochondrial Rho GTPase"/>
    <property type="match status" value="1"/>
</dbReference>
<dbReference type="FunFam" id="3.40.50.300:FF:000248">
    <property type="entry name" value="Mitochondrial Rho GTPase"/>
    <property type="match status" value="1"/>
</dbReference>
<dbReference type="Gene3D" id="1.10.238.10">
    <property type="entry name" value="EF-hand"/>
    <property type="match status" value="2"/>
</dbReference>
<dbReference type="Gene3D" id="3.40.50.300">
    <property type="entry name" value="P-loop containing nucleotide triphosphate hydrolases"/>
    <property type="match status" value="2"/>
</dbReference>
<dbReference type="InterPro" id="IPR011992">
    <property type="entry name" value="EF-hand-dom_pair"/>
</dbReference>
<dbReference type="InterPro" id="IPR018247">
    <property type="entry name" value="EF_Hand_1_Ca_BS"/>
</dbReference>
<dbReference type="InterPro" id="IPR013566">
    <property type="entry name" value="EF_hand_assoc_1"/>
</dbReference>
<dbReference type="InterPro" id="IPR013567">
    <property type="entry name" value="EF_hand_assoc_2"/>
</dbReference>
<dbReference type="InterPro" id="IPR002048">
    <property type="entry name" value="EF_hand_dom"/>
</dbReference>
<dbReference type="InterPro" id="IPR021181">
    <property type="entry name" value="Miro"/>
</dbReference>
<dbReference type="InterPro" id="IPR052266">
    <property type="entry name" value="Miro-EF-hand_domain"/>
</dbReference>
<dbReference type="InterPro" id="IPR020860">
    <property type="entry name" value="MIRO_dom"/>
</dbReference>
<dbReference type="InterPro" id="IPR027417">
    <property type="entry name" value="P-loop_NTPase"/>
</dbReference>
<dbReference type="InterPro" id="IPR005225">
    <property type="entry name" value="Small_GTP-bd"/>
</dbReference>
<dbReference type="InterPro" id="IPR001806">
    <property type="entry name" value="Small_GTPase"/>
</dbReference>
<dbReference type="NCBIfam" id="TIGR00231">
    <property type="entry name" value="small_GTP"/>
    <property type="match status" value="1"/>
</dbReference>
<dbReference type="PANTHER" id="PTHR46819">
    <property type="entry name" value="EF-HAND CALCIUM-BINDING DOMAIN-CONTAINING PROTEIN 7"/>
    <property type="match status" value="1"/>
</dbReference>
<dbReference type="PANTHER" id="PTHR46819:SF1">
    <property type="entry name" value="EF-HAND CALCIUM-BINDING DOMAIN-CONTAINING PROTEIN 7"/>
    <property type="match status" value="1"/>
</dbReference>
<dbReference type="Pfam" id="PF08355">
    <property type="entry name" value="EF_assoc_1"/>
    <property type="match status" value="1"/>
</dbReference>
<dbReference type="Pfam" id="PF08356">
    <property type="entry name" value="EF_assoc_2"/>
    <property type="match status" value="1"/>
</dbReference>
<dbReference type="Pfam" id="PF00071">
    <property type="entry name" value="Ras"/>
    <property type="match status" value="2"/>
</dbReference>
<dbReference type="PIRSF" id="PIRSF037488">
    <property type="entry name" value="Mt_Rho_GTPase"/>
    <property type="match status" value="1"/>
</dbReference>
<dbReference type="PRINTS" id="PR00449">
    <property type="entry name" value="RASTRNSFRMNG"/>
</dbReference>
<dbReference type="SMART" id="SM00054">
    <property type="entry name" value="EFh"/>
    <property type="match status" value="2"/>
</dbReference>
<dbReference type="SMART" id="SM00175">
    <property type="entry name" value="RAB"/>
    <property type="match status" value="1"/>
</dbReference>
<dbReference type="SMART" id="SM00173">
    <property type="entry name" value="RAS"/>
    <property type="match status" value="1"/>
</dbReference>
<dbReference type="SMART" id="SM00174">
    <property type="entry name" value="RHO"/>
    <property type="match status" value="1"/>
</dbReference>
<dbReference type="SUPFAM" id="SSF47473">
    <property type="entry name" value="EF-hand"/>
    <property type="match status" value="1"/>
</dbReference>
<dbReference type="SUPFAM" id="SSF52540">
    <property type="entry name" value="P-loop containing nucleoside triphosphate hydrolases"/>
    <property type="match status" value="2"/>
</dbReference>
<dbReference type="PROSITE" id="PS00018">
    <property type="entry name" value="EF_HAND_1"/>
    <property type="match status" value="1"/>
</dbReference>
<dbReference type="PROSITE" id="PS50222">
    <property type="entry name" value="EF_HAND_2"/>
    <property type="match status" value="2"/>
</dbReference>
<dbReference type="PROSITE" id="PS51423">
    <property type="entry name" value="MIRO"/>
    <property type="match status" value="2"/>
</dbReference>